<feature type="signal peptide">
    <location>
        <begin position="1"/>
        <end position="28"/>
    </location>
</feature>
<feature type="chain" id="PRO_0000022362" description="S-locus-specific glycoprotein BS29-1">
    <location>
        <begin position="29"/>
        <end position="444"/>
    </location>
</feature>
<feature type="domain" description="Bulb-type lectin" evidence="3">
    <location>
        <begin position="31"/>
        <end position="159"/>
    </location>
</feature>
<feature type="domain" description="PAN" evidence="4">
    <location>
        <begin position="356"/>
        <end position="437"/>
    </location>
</feature>
<feature type="glycosylation site" description="N-linked (GlcNAc...) asparagine" evidence="2">
    <location>
        <position position="43"/>
    </location>
</feature>
<feature type="glycosylation site" description="N-linked (GlcNAc...) asparagine" evidence="2">
    <location>
        <position position="125"/>
    </location>
</feature>
<feature type="glycosylation site" description="N-linked (GlcNAc...) asparagine" evidence="2">
    <location>
        <position position="180"/>
    </location>
</feature>
<feature type="glycosylation site" description="N-linked (GlcNAc...) asparagine" evidence="2">
    <location>
        <position position="243"/>
    </location>
</feature>
<feature type="glycosylation site" description="N-linked (GlcNAc...) asparagine" evidence="2">
    <location>
        <position position="396"/>
    </location>
</feature>
<feature type="disulfide bond" evidence="1">
    <location>
        <begin position="387"/>
        <end position="412"/>
    </location>
</feature>
<feature type="disulfide bond" evidence="1">
    <location>
        <begin position="395"/>
        <end position="397"/>
    </location>
</feature>
<keyword id="KW-1015">Disulfide bond</keyword>
<keyword id="KW-0325">Glycoprotein</keyword>
<keyword id="KW-0713">Self-incompatibility</keyword>
<keyword id="KW-0732">Signal</keyword>
<dbReference type="EMBL" id="X16122">
    <property type="protein sequence ID" value="CAA34253.1"/>
    <property type="molecule type" value="mRNA"/>
</dbReference>
<dbReference type="PIR" id="S04905">
    <property type="entry name" value="S04905"/>
</dbReference>
<dbReference type="SMR" id="P22552"/>
<dbReference type="GlyCosmos" id="P22552">
    <property type="glycosylation" value="5 sites, No reported glycans"/>
</dbReference>
<dbReference type="GO" id="GO:0060320">
    <property type="term" value="P:rejection of self pollen"/>
    <property type="evidence" value="ECO:0007669"/>
    <property type="project" value="UniProtKB-KW"/>
</dbReference>
<dbReference type="CDD" id="cd00028">
    <property type="entry name" value="B_lectin"/>
    <property type="match status" value="1"/>
</dbReference>
<dbReference type="CDD" id="cd01098">
    <property type="entry name" value="PAN_AP_plant"/>
    <property type="match status" value="1"/>
</dbReference>
<dbReference type="Gene3D" id="2.90.10.10">
    <property type="entry name" value="Bulb-type lectin domain"/>
    <property type="match status" value="1"/>
</dbReference>
<dbReference type="Gene3D" id="3.50.4.10">
    <property type="entry name" value="Hepatocyte Growth Factor"/>
    <property type="match status" value="1"/>
</dbReference>
<dbReference type="InterPro" id="IPR001480">
    <property type="entry name" value="Bulb-type_lectin_dom"/>
</dbReference>
<dbReference type="InterPro" id="IPR036426">
    <property type="entry name" value="Bulb-type_lectin_dom_sf"/>
</dbReference>
<dbReference type="InterPro" id="IPR003609">
    <property type="entry name" value="Pan_app"/>
</dbReference>
<dbReference type="InterPro" id="IPR000858">
    <property type="entry name" value="S_locus_glycoprot_dom"/>
</dbReference>
<dbReference type="InterPro" id="IPR035446">
    <property type="entry name" value="SLSG/EP1"/>
</dbReference>
<dbReference type="PANTHER" id="PTHR32444">
    <property type="entry name" value="BULB-TYPE LECTIN DOMAIN-CONTAINING PROTEIN"/>
    <property type="match status" value="1"/>
</dbReference>
<dbReference type="PANTHER" id="PTHR32444:SF89">
    <property type="entry name" value="S GLYCOPROTEIN"/>
    <property type="match status" value="1"/>
</dbReference>
<dbReference type="Pfam" id="PF01453">
    <property type="entry name" value="B_lectin"/>
    <property type="match status" value="1"/>
</dbReference>
<dbReference type="Pfam" id="PF08276">
    <property type="entry name" value="PAN_2"/>
    <property type="match status" value="1"/>
</dbReference>
<dbReference type="Pfam" id="PF00954">
    <property type="entry name" value="S_locus_glycop"/>
    <property type="match status" value="1"/>
</dbReference>
<dbReference type="PIRSF" id="PIRSF002686">
    <property type="entry name" value="SLG"/>
    <property type="match status" value="1"/>
</dbReference>
<dbReference type="SMART" id="SM00108">
    <property type="entry name" value="B_lectin"/>
    <property type="match status" value="1"/>
</dbReference>
<dbReference type="SMART" id="SM00473">
    <property type="entry name" value="PAN_AP"/>
    <property type="match status" value="1"/>
</dbReference>
<dbReference type="SUPFAM" id="SSF51110">
    <property type="entry name" value="alpha-D-mannose-specific plant lectins"/>
    <property type="match status" value="1"/>
</dbReference>
<dbReference type="PROSITE" id="PS50927">
    <property type="entry name" value="BULB_LECTIN"/>
    <property type="match status" value="1"/>
</dbReference>
<dbReference type="PROSITE" id="PS50948">
    <property type="entry name" value="PAN"/>
    <property type="match status" value="1"/>
</dbReference>
<proteinExistence type="evidence at transcript level"/>
<organism>
    <name type="scientific">Brassica oleracea var. alboglabra</name>
    <name type="common">Chinese kale</name>
    <name type="synonym">Brassica alboglabra</name>
    <dbReference type="NCBI Taxonomy" id="3714"/>
    <lineage>
        <taxon>Eukaryota</taxon>
        <taxon>Viridiplantae</taxon>
        <taxon>Streptophyta</taxon>
        <taxon>Embryophyta</taxon>
        <taxon>Tracheophyta</taxon>
        <taxon>Spermatophyta</taxon>
        <taxon>Magnoliopsida</taxon>
        <taxon>eudicotyledons</taxon>
        <taxon>Gunneridae</taxon>
        <taxon>Pentapetalae</taxon>
        <taxon>rosids</taxon>
        <taxon>malvids</taxon>
        <taxon>Brassicales</taxon>
        <taxon>Brassicaceae</taxon>
        <taxon>Brassiceae</taxon>
        <taxon>Brassica</taxon>
    </lineage>
</organism>
<comment type="function">
    <text>Involved in sporophytic self-incompatibility system (the inability of flowering plants to achieve self-fertilization).</text>
</comment>
<comment type="tissue specificity">
    <text>Stigma.</text>
</comment>
<comment type="polymorphism">
    <text evidence="5">There are a total of 50 different S alleles in B.oleracea.</text>
</comment>
<evidence type="ECO:0000250" key="1"/>
<evidence type="ECO:0000255" key="2"/>
<evidence type="ECO:0000255" key="3">
    <source>
        <dbReference type="PROSITE-ProRule" id="PRU00038"/>
    </source>
</evidence>
<evidence type="ECO:0000255" key="4">
    <source>
        <dbReference type="PROSITE-ProRule" id="PRU00315"/>
    </source>
</evidence>
<evidence type="ECO:0000305" key="5">
    <source>
    </source>
</evidence>
<gene>
    <name type="primary">SLSG</name>
</gene>
<name>SLSG1_BRAOA</name>
<accession>P22552</accession>
<protein>
    <recommendedName>
        <fullName>S-locus-specific glycoprotein BS29-1</fullName>
    </recommendedName>
</protein>
<reference key="1">
    <citation type="journal article" date="1989" name="Mol. Gen. Genet.">
        <title>A homozygous S genotype of Brassica oleracea expresses two S-like genes.</title>
        <authorList>
            <person name="Trick M."/>
            <person name="Flavell R.B."/>
        </authorList>
    </citation>
    <scope>NUCLEOTIDE SEQUENCE [MRNA]</scope>
    <scope>POLYMORPHISM</scope>
</reference>
<sequence length="444" mass="50254">MRGVIPNYHHSYTLLFFVILVLFPHVFSTNTLSPNEALTISSNKTLVSPGDVFELGFFKTTTRNSPDGTDRWYLGIWYKTTSGHRTYVWVANRDNALHNSMGTLKISHASLVLLDHSNTPVWSTNFTGVAHLPVTAELLANGNFVLRDSKTTALDRFMWQSFDYPVDTLLPEMKLGRNRNGSGNEKILTSWKSPTDPSSGDYSFILETEGFLHEFYLLNNEFKVYRTGPWNGVRFNGIPKMQNWSYIDNSFIDNNKEVAYSFQVNNNHNIHTRFRMSSTGYLQVITWTKTVPQRNMFWSFPEDTCDLYKVCGPYAYCDMHTSPTCNCIKGFVPKNAGRWDLRDMSGGCVRSSKLSCGEGDGFLRMSQMKLPETSEAVVDKRIGLKECREKCVRDCNCTGYANMDIMNGGSGCVMWTGELDDMRKYNAGGQDLYLKVAAASLVPS</sequence>